<comment type="function">
    <text evidence="1">Site-specific tyrosine recombinase, which acts by catalyzing the cutting and rejoining of the recombining DNA molecules.</text>
</comment>
<comment type="subcellular location">
    <subcellularLocation>
        <location evidence="4">Cytoplasm</location>
    </subcellularLocation>
</comment>
<comment type="similarity">
    <text evidence="4">Belongs to the 'phage' integrase family.</text>
</comment>
<proteinExistence type="inferred from homology"/>
<protein>
    <recommendedName>
        <fullName evidence="4">Tyrosine recombinase slr0733</fullName>
    </recommendedName>
</protein>
<gene>
    <name evidence="5" type="primary">xerC</name>
    <name type="ordered locus">slr0733</name>
</gene>
<sequence length="313" mass="35095">MFLPSPNNLSGLNQNILEELLRDKRSPNTRRTYAKALKDFFLTMAGEEPSPDVIAWFLSLDHFQAIAMVLRYRAELLAKDLKPATINVRLAAIKSLVNYARRVGKCQYTLEDVEGLKAETYRDTTGVSPTSFKQITDHITPDSLKGKRDLAIMRLLWDNALRRAEVCGLNVGDYQPTERQLLIKGKGKLGKQAITLSAKGMALINQWLTAIGPRPKNEPLFCTLDRATFGHRLSGNAIYNLVRTSAESAGIHKVMSPHRVRHSAITAALEATNGDTRKVQKLSRHSNLNTLMIYDDNRHQHQAQITDILADLL</sequence>
<feature type="chain" id="PRO_0000095341" description="Tyrosine recombinase slr0733">
    <location>
        <begin position="1"/>
        <end position="313"/>
    </location>
</feature>
<feature type="domain" description="Core-binding (CB)" evidence="3">
    <location>
        <begin position="7"/>
        <end position="101"/>
    </location>
</feature>
<feature type="domain" description="Tyr recombinase" evidence="2">
    <location>
        <begin position="122"/>
        <end position="307"/>
    </location>
</feature>
<feature type="active site" evidence="2">
    <location>
        <position position="162"/>
    </location>
</feature>
<feature type="active site" evidence="2">
    <location>
        <position position="188"/>
    </location>
</feature>
<feature type="active site" evidence="2">
    <location>
        <position position="258"/>
    </location>
</feature>
<feature type="active site" evidence="2">
    <location>
        <position position="261"/>
    </location>
</feature>
<feature type="active site" evidence="2">
    <location>
        <position position="285"/>
    </location>
</feature>
<feature type="active site" description="O-(3'-phospho-DNA)-tyrosine intermediate" evidence="2">
    <location>
        <position position="294"/>
    </location>
</feature>
<keyword id="KW-0131">Cell cycle</keyword>
<keyword id="KW-0132">Cell division</keyword>
<keyword id="KW-0159">Chromosome partition</keyword>
<keyword id="KW-0963">Cytoplasm</keyword>
<keyword id="KW-0229">DNA integration</keyword>
<keyword id="KW-0233">DNA recombination</keyword>
<keyword id="KW-0238">DNA-binding</keyword>
<keyword id="KW-1185">Reference proteome</keyword>
<evidence type="ECO:0000250" key="1">
    <source>
        <dbReference type="UniProtKB" id="P0A8P8"/>
    </source>
</evidence>
<evidence type="ECO:0000255" key="2">
    <source>
        <dbReference type="PROSITE-ProRule" id="PRU01246"/>
    </source>
</evidence>
<evidence type="ECO:0000255" key="3">
    <source>
        <dbReference type="PROSITE-ProRule" id="PRU01248"/>
    </source>
</evidence>
<evidence type="ECO:0000305" key="4"/>
<evidence type="ECO:0000312" key="5">
    <source>
        <dbReference type="EMBL" id="BAA16682.1"/>
    </source>
</evidence>
<reference key="1">
    <citation type="journal article" date="1996" name="DNA Res.">
        <title>Sequence analysis of the genome of the unicellular cyanobacterium Synechocystis sp. strain PCC6803. II. Sequence determination of the entire genome and assignment of potential protein-coding regions.</title>
        <authorList>
            <person name="Kaneko T."/>
            <person name="Sato S."/>
            <person name="Kotani H."/>
            <person name="Tanaka A."/>
            <person name="Asamizu E."/>
            <person name="Nakamura Y."/>
            <person name="Miyajima N."/>
            <person name="Hirosawa M."/>
            <person name="Sugiura M."/>
            <person name="Sasamoto S."/>
            <person name="Kimura T."/>
            <person name="Hosouchi T."/>
            <person name="Matsuno A."/>
            <person name="Muraki A."/>
            <person name="Nakazaki N."/>
            <person name="Naruo K."/>
            <person name="Okumura S."/>
            <person name="Shimpo S."/>
            <person name="Takeuchi C."/>
            <person name="Wada T."/>
            <person name="Watanabe A."/>
            <person name="Yamada M."/>
            <person name="Yasuda M."/>
            <person name="Tabata S."/>
        </authorList>
    </citation>
    <scope>NUCLEOTIDE SEQUENCE [LARGE SCALE GENOMIC DNA]</scope>
    <source>
        <strain>ATCC 27184 / PCC 6803 / Kazusa</strain>
    </source>
</reference>
<organism>
    <name type="scientific">Synechocystis sp. (strain ATCC 27184 / PCC 6803 / Kazusa)</name>
    <dbReference type="NCBI Taxonomy" id="1111708"/>
    <lineage>
        <taxon>Bacteria</taxon>
        <taxon>Bacillati</taxon>
        <taxon>Cyanobacteriota</taxon>
        <taxon>Cyanophyceae</taxon>
        <taxon>Synechococcales</taxon>
        <taxon>Merismopediaceae</taxon>
        <taxon>Synechocystis</taxon>
    </lineage>
</organism>
<name>XER_SYNY3</name>
<accession>P72680</accession>
<dbReference type="EMBL" id="BA000022">
    <property type="protein sequence ID" value="BAA16682.1"/>
    <property type="molecule type" value="Genomic_DNA"/>
</dbReference>
<dbReference type="PIR" id="S74530">
    <property type="entry name" value="S74530"/>
</dbReference>
<dbReference type="SMR" id="P72680"/>
<dbReference type="DIP" id="DIP-48817N"/>
<dbReference type="FunCoup" id="P72680">
    <property type="interactions" value="310"/>
</dbReference>
<dbReference type="IntAct" id="P72680">
    <property type="interactions" value="21"/>
</dbReference>
<dbReference type="STRING" id="1148.gene:10497537"/>
<dbReference type="PaxDb" id="1148-1651754"/>
<dbReference type="EnsemblBacteria" id="BAA16682">
    <property type="protein sequence ID" value="BAA16682"/>
    <property type="gene ID" value="BAA16682"/>
</dbReference>
<dbReference type="KEGG" id="syn:slr0733"/>
<dbReference type="eggNOG" id="COG0582">
    <property type="taxonomic scope" value="Bacteria"/>
</dbReference>
<dbReference type="InParanoid" id="P72680"/>
<dbReference type="PhylomeDB" id="P72680"/>
<dbReference type="Proteomes" id="UP000001425">
    <property type="component" value="Chromosome"/>
</dbReference>
<dbReference type="GO" id="GO:0005737">
    <property type="term" value="C:cytoplasm"/>
    <property type="evidence" value="ECO:0007669"/>
    <property type="project" value="UniProtKB-SubCell"/>
</dbReference>
<dbReference type="GO" id="GO:0003677">
    <property type="term" value="F:DNA binding"/>
    <property type="evidence" value="ECO:0007669"/>
    <property type="project" value="UniProtKB-KW"/>
</dbReference>
<dbReference type="GO" id="GO:0009009">
    <property type="term" value="F:site-specific recombinase activity"/>
    <property type="evidence" value="ECO:0000318"/>
    <property type="project" value="GO_Central"/>
</dbReference>
<dbReference type="GO" id="GO:0051301">
    <property type="term" value="P:cell division"/>
    <property type="evidence" value="ECO:0007669"/>
    <property type="project" value="UniProtKB-KW"/>
</dbReference>
<dbReference type="GO" id="GO:0007059">
    <property type="term" value="P:chromosome segregation"/>
    <property type="evidence" value="ECO:0000318"/>
    <property type="project" value="GO_Central"/>
</dbReference>
<dbReference type="GO" id="GO:0006310">
    <property type="term" value="P:DNA recombination"/>
    <property type="evidence" value="ECO:0000318"/>
    <property type="project" value="GO_Central"/>
</dbReference>
<dbReference type="CDD" id="cd01195">
    <property type="entry name" value="INT_C_like_5"/>
    <property type="match status" value="1"/>
</dbReference>
<dbReference type="Gene3D" id="1.10.150.130">
    <property type="match status" value="1"/>
</dbReference>
<dbReference type="Gene3D" id="1.10.443.10">
    <property type="entry name" value="Intergrase catalytic core"/>
    <property type="match status" value="1"/>
</dbReference>
<dbReference type="InterPro" id="IPR044068">
    <property type="entry name" value="CB"/>
</dbReference>
<dbReference type="InterPro" id="IPR011010">
    <property type="entry name" value="DNA_brk_join_enz"/>
</dbReference>
<dbReference type="InterPro" id="IPR013762">
    <property type="entry name" value="Integrase-like_cat_sf"/>
</dbReference>
<dbReference type="InterPro" id="IPR002104">
    <property type="entry name" value="Integrase_catalytic"/>
</dbReference>
<dbReference type="InterPro" id="IPR010998">
    <property type="entry name" value="Integrase_recombinase_N"/>
</dbReference>
<dbReference type="InterPro" id="IPR004107">
    <property type="entry name" value="Integrase_SAM-like_N"/>
</dbReference>
<dbReference type="InterPro" id="IPR050090">
    <property type="entry name" value="Tyrosine_recombinase_XerCD"/>
</dbReference>
<dbReference type="PANTHER" id="PTHR30349">
    <property type="entry name" value="PHAGE INTEGRASE-RELATED"/>
    <property type="match status" value="1"/>
</dbReference>
<dbReference type="PANTHER" id="PTHR30349:SF64">
    <property type="entry name" value="PROPHAGE INTEGRASE INTD-RELATED"/>
    <property type="match status" value="1"/>
</dbReference>
<dbReference type="Pfam" id="PF02899">
    <property type="entry name" value="Phage_int_SAM_1"/>
    <property type="match status" value="1"/>
</dbReference>
<dbReference type="Pfam" id="PF00589">
    <property type="entry name" value="Phage_integrase"/>
    <property type="match status" value="1"/>
</dbReference>
<dbReference type="SUPFAM" id="SSF56349">
    <property type="entry name" value="DNA breaking-rejoining enzymes"/>
    <property type="match status" value="1"/>
</dbReference>
<dbReference type="SUPFAM" id="SSF47823">
    <property type="entry name" value="lambda integrase-like, N-terminal domain"/>
    <property type="match status" value="1"/>
</dbReference>
<dbReference type="PROSITE" id="PS51900">
    <property type="entry name" value="CB"/>
    <property type="match status" value="1"/>
</dbReference>
<dbReference type="PROSITE" id="PS51898">
    <property type="entry name" value="TYR_RECOMBINASE"/>
    <property type="match status" value="1"/>
</dbReference>